<comment type="function">
    <text evidence="1">Transport of potassium into the cell. Likely operates as a K(+):H(+) symporter.</text>
</comment>
<comment type="catalytic activity">
    <reaction evidence="1">
        <text>K(+)(in) + H(+)(in) = K(+)(out) + H(+)(out)</text>
        <dbReference type="Rhea" id="RHEA:28490"/>
        <dbReference type="ChEBI" id="CHEBI:15378"/>
        <dbReference type="ChEBI" id="CHEBI:29103"/>
    </reaction>
    <physiologicalReaction direction="right-to-left" evidence="1">
        <dbReference type="Rhea" id="RHEA:28492"/>
    </physiologicalReaction>
</comment>
<comment type="subcellular location">
    <subcellularLocation>
        <location evidence="1">Cell membrane</location>
        <topology evidence="1">Multi-pass membrane protein</topology>
    </subcellularLocation>
</comment>
<comment type="similarity">
    <text evidence="1">Belongs to the HAK/KUP transporter (TC 2.A.72) family.</text>
</comment>
<feature type="chain" id="PRO_0000209025" description="Probable potassium transport system protein Kup 2">
    <location>
        <begin position="1"/>
        <end position="671"/>
    </location>
</feature>
<feature type="transmembrane region" description="Helical" evidence="1">
    <location>
        <begin position="18"/>
        <end position="38"/>
    </location>
</feature>
<feature type="transmembrane region" description="Helical" evidence="1">
    <location>
        <begin position="60"/>
        <end position="80"/>
    </location>
</feature>
<feature type="transmembrane region" description="Helical" evidence="1">
    <location>
        <begin position="103"/>
        <end position="123"/>
    </location>
</feature>
<feature type="transmembrane region" description="Helical" evidence="1">
    <location>
        <begin position="146"/>
        <end position="166"/>
    </location>
</feature>
<feature type="transmembrane region" description="Helical" evidence="1">
    <location>
        <begin position="173"/>
        <end position="193"/>
    </location>
</feature>
<feature type="transmembrane region" description="Helical" evidence="1">
    <location>
        <begin position="218"/>
        <end position="238"/>
    </location>
</feature>
<feature type="transmembrane region" description="Helical" evidence="1">
    <location>
        <begin position="252"/>
        <end position="272"/>
    </location>
</feature>
<feature type="transmembrane region" description="Helical" evidence="1">
    <location>
        <begin position="292"/>
        <end position="312"/>
    </location>
</feature>
<feature type="transmembrane region" description="Helical" evidence="1">
    <location>
        <begin position="343"/>
        <end position="363"/>
    </location>
</feature>
<feature type="transmembrane region" description="Helical" evidence="1">
    <location>
        <begin position="373"/>
        <end position="393"/>
    </location>
</feature>
<feature type="transmembrane region" description="Helical" evidence="1">
    <location>
        <begin position="402"/>
        <end position="422"/>
    </location>
</feature>
<feature type="transmembrane region" description="Helical" evidence="1">
    <location>
        <begin position="424"/>
        <end position="444"/>
    </location>
</feature>
<name>KUP2_LACLA</name>
<reference key="1">
    <citation type="journal article" date="2001" name="Genome Res.">
        <title>The complete genome sequence of the lactic acid bacterium Lactococcus lactis ssp. lactis IL1403.</title>
        <authorList>
            <person name="Bolotin A."/>
            <person name="Wincker P."/>
            <person name="Mauger S."/>
            <person name="Jaillon O."/>
            <person name="Malarme K."/>
            <person name="Weissenbach J."/>
            <person name="Ehrlich S.D."/>
            <person name="Sorokin A."/>
        </authorList>
    </citation>
    <scope>NUCLEOTIDE SEQUENCE [LARGE SCALE GENOMIC DNA]</scope>
    <source>
        <strain>IL1403</strain>
    </source>
</reference>
<proteinExistence type="inferred from homology"/>
<sequence>MGQVHLHNRSFNKATSAGFLIALGIVYGDIGTSPLYAMQAIVRGQGGLANLSESFILGAVSLVIWTLTLITTVKYVLIALKADNHHEGGIFSLFTLVRRMRKWLIIPAMIGGATLLADGALTPAVTVTSAIEGLRGVTHVYSNQTAVMVTTLIILAFLFLIQRFGASLVGRLFGPIMFIWFGFLGVSGLINSFLDLSILKAINPYYAIHLLFSPENKAGFFILGSIFLVTTGAEALYSDLGHVGRGNIYVSWPFVKICIILSYCGQGAWLLAHRGEHIEKLNPFFAVLPDNMVIYVVILSTLAAIIASQALISGSFTLVSEAIRLKLLPLFKIYYPGQTLGQLYIPAVNFALWVTTSFFVLYFKTSEHMEAAYSLAITITMLMTTTLLTYFLIQKGTPKIAIAIISIGLFCIEGSFFAASLVQFINGAYIVVLIALAIIFVMFIWNKSHKIVMKYIKSLNINEYKNQLNALRHDESYDLYQTNVVYLTSKMDHEWIDRSILYSILDKRPKRAECYWFVNVKVTDEPYTSEYKVDMMDTDFIVRVNLYLGFRMRQEVPRYLRTIVTDLMESGRLPRQHQHYSITPGRKVGDFRFVVVEEKLMNARQMPGFERFVLQTKAQIKRITASPIRWFGLQFSEVTVETVPLVLSDVRNLEIHERLEQVDEAEASATH</sequence>
<evidence type="ECO:0000255" key="1">
    <source>
        <dbReference type="HAMAP-Rule" id="MF_01522"/>
    </source>
</evidence>
<keyword id="KW-1003">Cell membrane</keyword>
<keyword id="KW-0406">Ion transport</keyword>
<keyword id="KW-0472">Membrane</keyword>
<keyword id="KW-0630">Potassium</keyword>
<keyword id="KW-0633">Potassium transport</keyword>
<keyword id="KW-1185">Reference proteome</keyword>
<keyword id="KW-0769">Symport</keyword>
<keyword id="KW-0812">Transmembrane</keyword>
<keyword id="KW-1133">Transmembrane helix</keyword>
<keyword id="KW-0813">Transport</keyword>
<organism>
    <name type="scientific">Lactococcus lactis subsp. lactis (strain IL1403)</name>
    <name type="common">Streptococcus lactis</name>
    <dbReference type="NCBI Taxonomy" id="272623"/>
    <lineage>
        <taxon>Bacteria</taxon>
        <taxon>Bacillati</taxon>
        <taxon>Bacillota</taxon>
        <taxon>Bacilli</taxon>
        <taxon>Lactobacillales</taxon>
        <taxon>Streptococcaceae</taxon>
        <taxon>Lactococcus</taxon>
    </lineage>
</organism>
<dbReference type="EMBL" id="AE005176">
    <property type="protein sequence ID" value="AAK04722.1"/>
    <property type="molecule type" value="Genomic_DNA"/>
</dbReference>
<dbReference type="PIR" id="H86702">
    <property type="entry name" value="H86702"/>
</dbReference>
<dbReference type="RefSeq" id="NP_266780.1">
    <property type="nucleotide sequence ID" value="NC_002662.1"/>
</dbReference>
<dbReference type="RefSeq" id="WP_003129537.1">
    <property type="nucleotide sequence ID" value="NC_002662.1"/>
</dbReference>
<dbReference type="PaxDb" id="272623-L11749"/>
<dbReference type="EnsemblBacteria" id="AAK04722">
    <property type="protein sequence ID" value="AAK04722"/>
    <property type="gene ID" value="L11749"/>
</dbReference>
<dbReference type="KEGG" id="lla:L11749"/>
<dbReference type="PATRIC" id="fig|272623.7.peg.666"/>
<dbReference type="eggNOG" id="COG3158">
    <property type="taxonomic scope" value="Bacteria"/>
</dbReference>
<dbReference type="HOGENOM" id="CLU_008142_4_1_9"/>
<dbReference type="OrthoDB" id="9805577at2"/>
<dbReference type="Proteomes" id="UP000002196">
    <property type="component" value="Chromosome"/>
</dbReference>
<dbReference type="GO" id="GO:0005886">
    <property type="term" value="C:plasma membrane"/>
    <property type="evidence" value="ECO:0007669"/>
    <property type="project" value="UniProtKB-SubCell"/>
</dbReference>
<dbReference type="GO" id="GO:0015079">
    <property type="term" value="F:potassium ion transmembrane transporter activity"/>
    <property type="evidence" value="ECO:0007669"/>
    <property type="project" value="UniProtKB-UniRule"/>
</dbReference>
<dbReference type="GO" id="GO:0015293">
    <property type="term" value="F:symporter activity"/>
    <property type="evidence" value="ECO:0007669"/>
    <property type="project" value="UniProtKB-UniRule"/>
</dbReference>
<dbReference type="HAMAP" id="MF_01522">
    <property type="entry name" value="Kup"/>
    <property type="match status" value="1"/>
</dbReference>
<dbReference type="InterPro" id="IPR003855">
    <property type="entry name" value="K+_transporter"/>
</dbReference>
<dbReference type="InterPro" id="IPR053952">
    <property type="entry name" value="K_trans_C"/>
</dbReference>
<dbReference type="InterPro" id="IPR053951">
    <property type="entry name" value="K_trans_N"/>
</dbReference>
<dbReference type="InterPro" id="IPR023051">
    <property type="entry name" value="Kup"/>
</dbReference>
<dbReference type="PANTHER" id="PTHR30540:SF83">
    <property type="entry name" value="K+ POTASSIUM TRANSPORTER"/>
    <property type="match status" value="1"/>
</dbReference>
<dbReference type="PANTHER" id="PTHR30540">
    <property type="entry name" value="OSMOTIC STRESS POTASSIUM TRANSPORTER"/>
    <property type="match status" value="1"/>
</dbReference>
<dbReference type="Pfam" id="PF02705">
    <property type="entry name" value="K_trans"/>
    <property type="match status" value="1"/>
</dbReference>
<dbReference type="Pfam" id="PF22776">
    <property type="entry name" value="K_trans_C"/>
    <property type="match status" value="1"/>
</dbReference>
<accession>Q9CHU4</accession>
<protein>
    <recommendedName>
        <fullName evidence="1">Probable potassium transport system protein Kup 2</fullName>
    </recommendedName>
</protein>
<gene>
    <name evidence="1" type="primary">kup2</name>
    <name type="synonym">kupB</name>
    <name type="ordered locus">LL0624</name>
    <name type="ORF">L11749</name>
</gene>